<evidence type="ECO:0000255" key="1">
    <source>
        <dbReference type="HAMAP-Rule" id="MF_00081"/>
    </source>
</evidence>
<comment type="function">
    <text evidence="1">Negative regulator of class I heat shock genes (grpE-dnaK-dnaJ and groELS operons). Prevents heat-shock induction of these operons.</text>
</comment>
<comment type="similarity">
    <text evidence="1">Belongs to the HrcA family.</text>
</comment>
<keyword id="KW-1185">Reference proteome</keyword>
<keyword id="KW-0678">Repressor</keyword>
<keyword id="KW-0346">Stress response</keyword>
<keyword id="KW-0804">Transcription</keyword>
<keyword id="KW-0805">Transcription regulation</keyword>
<organism>
    <name type="scientific">Burkholderia pseudomallei (strain K96243)</name>
    <dbReference type="NCBI Taxonomy" id="272560"/>
    <lineage>
        <taxon>Bacteria</taxon>
        <taxon>Pseudomonadati</taxon>
        <taxon>Pseudomonadota</taxon>
        <taxon>Betaproteobacteria</taxon>
        <taxon>Burkholderiales</taxon>
        <taxon>Burkholderiaceae</taxon>
        <taxon>Burkholderia</taxon>
        <taxon>pseudomallei group</taxon>
    </lineage>
</organism>
<protein>
    <recommendedName>
        <fullName evidence="1">Heat-inducible transcription repressor HrcA</fullName>
    </recommendedName>
</protein>
<proteinExistence type="inferred from homology"/>
<dbReference type="EMBL" id="BX571965">
    <property type="protein sequence ID" value="CAH36842.1"/>
    <property type="molecule type" value="Genomic_DNA"/>
</dbReference>
<dbReference type="RefSeq" id="WP_004194248.1">
    <property type="nucleotide sequence ID" value="NZ_CP009538.1"/>
</dbReference>
<dbReference type="RefSeq" id="YP_109426.1">
    <property type="nucleotide sequence ID" value="NC_006350.1"/>
</dbReference>
<dbReference type="SMR" id="Q63R42"/>
<dbReference type="STRING" id="272560.BPSL2832"/>
<dbReference type="GeneID" id="93061421"/>
<dbReference type="KEGG" id="bps:BPSL2832"/>
<dbReference type="PATRIC" id="fig|272560.51.peg.2470"/>
<dbReference type="eggNOG" id="COG1420">
    <property type="taxonomic scope" value="Bacteria"/>
</dbReference>
<dbReference type="Proteomes" id="UP000000605">
    <property type="component" value="Chromosome 1"/>
</dbReference>
<dbReference type="GO" id="GO:0003677">
    <property type="term" value="F:DNA binding"/>
    <property type="evidence" value="ECO:0007669"/>
    <property type="project" value="InterPro"/>
</dbReference>
<dbReference type="GO" id="GO:0045892">
    <property type="term" value="P:negative regulation of DNA-templated transcription"/>
    <property type="evidence" value="ECO:0007669"/>
    <property type="project" value="UniProtKB-UniRule"/>
</dbReference>
<dbReference type="Gene3D" id="3.30.450.40">
    <property type="match status" value="1"/>
</dbReference>
<dbReference type="Gene3D" id="3.30.390.60">
    <property type="entry name" value="Heat-inducible transcription repressor hrca homolog, domain 3"/>
    <property type="match status" value="1"/>
</dbReference>
<dbReference type="Gene3D" id="1.10.10.10">
    <property type="entry name" value="Winged helix-like DNA-binding domain superfamily/Winged helix DNA-binding domain"/>
    <property type="match status" value="1"/>
</dbReference>
<dbReference type="HAMAP" id="MF_00081">
    <property type="entry name" value="HrcA"/>
    <property type="match status" value="1"/>
</dbReference>
<dbReference type="InterPro" id="IPR029016">
    <property type="entry name" value="GAF-like_dom_sf"/>
</dbReference>
<dbReference type="InterPro" id="IPR002571">
    <property type="entry name" value="HrcA"/>
</dbReference>
<dbReference type="InterPro" id="IPR021153">
    <property type="entry name" value="HrcA_C"/>
</dbReference>
<dbReference type="InterPro" id="IPR036388">
    <property type="entry name" value="WH-like_DNA-bd_sf"/>
</dbReference>
<dbReference type="InterPro" id="IPR036390">
    <property type="entry name" value="WH_DNA-bd_sf"/>
</dbReference>
<dbReference type="InterPro" id="IPR005104">
    <property type="entry name" value="WHTH_HrcA_DNA-bd"/>
</dbReference>
<dbReference type="InterPro" id="IPR023120">
    <property type="entry name" value="WHTH_transcript_rep_HrcA_IDD"/>
</dbReference>
<dbReference type="NCBIfam" id="TIGR00331">
    <property type="entry name" value="hrcA"/>
    <property type="match status" value="1"/>
</dbReference>
<dbReference type="PANTHER" id="PTHR34824">
    <property type="entry name" value="HEAT-INDUCIBLE TRANSCRIPTION REPRESSOR HRCA"/>
    <property type="match status" value="1"/>
</dbReference>
<dbReference type="PANTHER" id="PTHR34824:SF1">
    <property type="entry name" value="HEAT-INDUCIBLE TRANSCRIPTION REPRESSOR HRCA"/>
    <property type="match status" value="1"/>
</dbReference>
<dbReference type="Pfam" id="PF01628">
    <property type="entry name" value="HrcA"/>
    <property type="match status" value="1"/>
</dbReference>
<dbReference type="Pfam" id="PF03444">
    <property type="entry name" value="HrcA_DNA-bdg"/>
    <property type="match status" value="1"/>
</dbReference>
<dbReference type="PIRSF" id="PIRSF005485">
    <property type="entry name" value="HrcA"/>
    <property type="match status" value="1"/>
</dbReference>
<dbReference type="SUPFAM" id="SSF55781">
    <property type="entry name" value="GAF domain-like"/>
    <property type="match status" value="1"/>
</dbReference>
<dbReference type="SUPFAM" id="SSF46785">
    <property type="entry name" value="Winged helix' DNA-binding domain"/>
    <property type="match status" value="1"/>
</dbReference>
<name>HRCA_BURPS</name>
<reference key="1">
    <citation type="journal article" date="2004" name="Proc. Natl. Acad. Sci. U.S.A.">
        <title>Genomic plasticity of the causative agent of melioidosis, Burkholderia pseudomallei.</title>
        <authorList>
            <person name="Holden M.T.G."/>
            <person name="Titball R.W."/>
            <person name="Peacock S.J."/>
            <person name="Cerdeno-Tarraga A.-M."/>
            <person name="Atkins T."/>
            <person name="Crossman L.C."/>
            <person name="Pitt T."/>
            <person name="Churcher C."/>
            <person name="Mungall K.L."/>
            <person name="Bentley S.D."/>
            <person name="Sebaihia M."/>
            <person name="Thomson N.R."/>
            <person name="Bason N."/>
            <person name="Beacham I.R."/>
            <person name="Brooks K."/>
            <person name="Brown K.A."/>
            <person name="Brown N.F."/>
            <person name="Challis G.L."/>
            <person name="Cherevach I."/>
            <person name="Chillingworth T."/>
            <person name="Cronin A."/>
            <person name="Crossett B."/>
            <person name="Davis P."/>
            <person name="DeShazer D."/>
            <person name="Feltwell T."/>
            <person name="Fraser A."/>
            <person name="Hance Z."/>
            <person name="Hauser H."/>
            <person name="Holroyd S."/>
            <person name="Jagels K."/>
            <person name="Keith K.E."/>
            <person name="Maddison M."/>
            <person name="Moule S."/>
            <person name="Price C."/>
            <person name="Quail M.A."/>
            <person name="Rabbinowitsch E."/>
            <person name="Rutherford K."/>
            <person name="Sanders M."/>
            <person name="Simmonds M."/>
            <person name="Songsivilai S."/>
            <person name="Stevens K."/>
            <person name="Tumapa S."/>
            <person name="Vesaratchavest M."/>
            <person name="Whitehead S."/>
            <person name="Yeats C."/>
            <person name="Barrell B.G."/>
            <person name="Oyston P.C.F."/>
            <person name="Parkhill J."/>
        </authorList>
    </citation>
    <scope>NUCLEOTIDE SEQUENCE [LARGE SCALE GENOMIC DNA]</scope>
    <source>
        <strain>K96243</strain>
    </source>
</reference>
<gene>
    <name evidence="1" type="primary">hrcA</name>
    <name type="ordered locus">BPSL2832</name>
</gene>
<feature type="chain" id="PRO_0000182461" description="Heat-inducible transcription repressor HrcA">
    <location>
        <begin position="1"/>
        <end position="340"/>
    </location>
</feature>
<accession>Q63R42</accession>
<sequence length="340" mass="37426">MLDPRARTLLKTLIERYIADGQPVGSRTLSRYSGLELSPATIRNVMSDLEELGLVSSPHTSAGRVPTPRGYRLFVDTMLTVESPIDSDAVTRLVQTTLQAGEPQQRVVAAAASVLSNLSQFAGVVLTPRRSHVFKQIEFLRLSDKRILLIIVTPEGDVQNRMIATQRDYAPAQLTEASNYINAHFAGLSFDEVRRRLREEIDQLRGDMTALMHAAVTASTEEPDDEETVLISGERNLLEVADLSSDMARLRKLFDVFDQKTSLLQLLDVSSHAQGVQIFIGGESTLVPIDEMSVVTAPYEVNGKIVGTLGVIGPTRMAYNRVIPIVDITARLLSLTLSQQ</sequence>